<feature type="chain" id="PRO_0000108421" description="Cytochrome c-type cyt cy">
    <location>
        <begin position="1"/>
        <end position="199"/>
    </location>
</feature>
<feature type="transmembrane region" description="Helical" evidence="1">
    <location>
        <begin position="7"/>
        <end position="27"/>
    </location>
</feature>
<feature type="region of interest" description="Disordered" evidence="3">
    <location>
        <begin position="69"/>
        <end position="93"/>
    </location>
</feature>
<feature type="compositionally biased region" description="Low complexity" evidence="3">
    <location>
        <begin position="69"/>
        <end position="80"/>
    </location>
</feature>
<feature type="binding site" description="covalent" evidence="2">
    <location>
        <position position="112"/>
    </location>
    <ligand>
        <name>heme c</name>
        <dbReference type="ChEBI" id="CHEBI:61717"/>
    </ligand>
</feature>
<feature type="binding site" description="covalent" evidence="2">
    <location>
        <position position="115"/>
    </location>
    <ligand>
        <name>heme c</name>
        <dbReference type="ChEBI" id="CHEBI:61717"/>
    </ligand>
</feature>
<feature type="binding site" description="axial binding residue" evidence="2">
    <location>
        <position position="116"/>
    </location>
    <ligand>
        <name>heme c</name>
        <dbReference type="ChEBI" id="CHEBI:61717"/>
    </ligand>
    <ligandPart>
        <name>Fe</name>
        <dbReference type="ChEBI" id="CHEBI:18248"/>
    </ligandPart>
</feature>
<feature type="binding site" description="axial binding residue" evidence="2">
    <location>
        <position position="148"/>
    </location>
    <ligand>
        <name>heme c</name>
        <dbReference type="ChEBI" id="CHEBI:61717"/>
    </ligand>
    <ligandPart>
        <name>Fe</name>
        <dbReference type="ChEBI" id="CHEBI:18248"/>
    </ligandPart>
</feature>
<dbReference type="EMBL" id="Z21797">
    <property type="protein sequence ID" value="CAA79860.1"/>
    <property type="molecule type" value="Genomic_DNA"/>
</dbReference>
<dbReference type="EMBL" id="CP001312">
    <property type="protein sequence ID" value="ADE86231.1"/>
    <property type="molecule type" value="Genomic_DNA"/>
</dbReference>
<dbReference type="PIR" id="S31938">
    <property type="entry name" value="S31938"/>
</dbReference>
<dbReference type="RefSeq" id="WP_013068210.1">
    <property type="nucleotide sequence ID" value="NC_014034.1"/>
</dbReference>
<dbReference type="PDB" id="6XKW">
    <property type="method" value="EM"/>
    <property type="resolution" value="5.20 A"/>
    <property type="chains" value="Y=1-199"/>
</dbReference>
<dbReference type="PDB" id="6XKX">
    <property type="method" value="EM"/>
    <property type="resolution" value="6.10 A"/>
    <property type="chains" value="p=31-199"/>
</dbReference>
<dbReference type="PDB" id="6XKZ">
    <property type="method" value="EM"/>
    <property type="resolution" value="7.20 A"/>
    <property type="chains" value="p=31-199"/>
</dbReference>
<dbReference type="PDBsum" id="6XKW"/>
<dbReference type="PDBsum" id="6XKX"/>
<dbReference type="PDBsum" id="6XKZ"/>
<dbReference type="EMDB" id="EMD-22227"/>
<dbReference type="EMDB" id="EMD-22228"/>
<dbReference type="EMDB" id="EMD-22230"/>
<dbReference type="SMR" id="Q05389"/>
<dbReference type="STRING" id="272942.RCAP_rcc02501"/>
<dbReference type="GeneID" id="31491328"/>
<dbReference type="KEGG" id="rcp:RCAP_rcc02501"/>
<dbReference type="eggNOG" id="COG3474">
    <property type="taxonomic scope" value="Bacteria"/>
</dbReference>
<dbReference type="HOGENOM" id="CLU_060944_4_1_5"/>
<dbReference type="OrthoDB" id="9805828at2"/>
<dbReference type="Proteomes" id="UP000002361">
    <property type="component" value="Chromosome"/>
</dbReference>
<dbReference type="GO" id="GO:0005886">
    <property type="term" value="C:plasma membrane"/>
    <property type="evidence" value="ECO:0007669"/>
    <property type="project" value="UniProtKB-SubCell"/>
</dbReference>
<dbReference type="GO" id="GO:0009055">
    <property type="term" value="F:electron transfer activity"/>
    <property type="evidence" value="ECO:0007669"/>
    <property type="project" value="InterPro"/>
</dbReference>
<dbReference type="GO" id="GO:0020037">
    <property type="term" value="F:heme binding"/>
    <property type="evidence" value="ECO:0007669"/>
    <property type="project" value="InterPro"/>
</dbReference>
<dbReference type="GO" id="GO:0046872">
    <property type="term" value="F:metal ion binding"/>
    <property type="evidence" value="ECO:0007669"/>
    <property type="project" value="UniProtKB-KW"/>
</dbReference>
<dbReference type="GO" id="GO:0015979">
    <property type="term" value="P:photosynthesis"/>
    <property type="evidence" value="ECO:0000315"/>
    <property type="project" value="CACAO"/>
</dbReference>
<dbReference type="FunFam" id="1.10.760.10:FF:000026">
    <property type="entry name" value="Cytochrome C, membrane-bound"/>
    <property type="match status" value="1"/>
</dbReference>
<dbReference type="Gene3D" id="1.10.760.10">
    <property type="entry name" value="Cytochrome c-like domain"/>
    <property type="match status" value="1"/>
</dbReference>
<dbReference type="InterPro" id="IPR009056">
    <property type="entry name" value="Cyt_c-like_dom"/>
</dbReference>
<dbReference type="InterPro" id="IPR036909">
    <property type="entry name" value="Cyt_c-like_dom_sf"/>
</dbReference>
<dbReference type="InterPro" id="IPR002327">
    <property type="entry name" value="Cyt_c_1A/1B"/>
</dbReference>
<dbReference type="PANTHER" id="PTHR11961">
    <property type="entry name" value="CYTOCHROME C"/>
    <property type="match status" value="1"/>
</dbReference>
<dbReference type="Pfam" id="PF00034">
    <property type="entry name" value="Cytochrom_C"/>
    <property type="match status" value="1"/>
</dbReference>
<dbReference type="PRINTS" id="PR00604">
    <property type="entry name" value="CYTCHRMECIAB"/>
</dbReference>
<dbReference type="SUPFAM" id="SSF46626">
    <property type="entry name" value="Cytochrome c"/>
    <property type="match status" value="1"/>
</dbReference>
<dbReference type="PROSITE" id="PS51007">
    <property type="entry name" value="CYTC"/>
    <property type="match status" value="1"/>
</dbReference>
<keyword id="KW-0002">3D-structure</keyword>
<keyword id="KW-1003">Cell membrane</keyword>
<keyword id="KW-0249">Electron transport</keyword>
<keyword id="KW-0349">Heme</keyword>
<keyword id="KW-0408">Iron</keyword>
<keyword id="KW-0472">Membrane</keyword>
<keyword id="KW-0479">Metal-binding</keyword>
<keyword id="KW-0602">Photosynthesis</keyword>
<keyword id="KW-1185">Reference proteome</keyword>
<keyword id="KW-0812">Transmembrane</keyword>
<keyword id="KW-1133">Transmembrane helix</keyword>
<keyword id="KW-0813">Transport</keyword>
<name>CYCY_RHOCB</name>
<sequence>MLVKTHITKIGVTLFAVALFYGFIYMLSNSLFATRPATAVAVGADGKALLPSVDEAAMPAKAPAAAAPAAETAEAAAPAEPAAPPPPAYVEVDPATITGDAKAGEEKFNKTCKACHKIDGKNAVGPHLNGVIGRATATVEGFKYSTAMKNHVGNWTPERLDIYLVSPKAEVPGTKMSFVGLPEAADRANVIAYLNTLPR</sequence>
<organism>
    <name type="scientific">Rhodobacter capsulatus (strain ATCC BAA-309 / NBRC 16581 / SB1003)</name>
    <dbReference type="NCBI Taxonomy" id="272942"/>
    <lineage>
        <taxon>Bacteria</taxon>
        <taxon>Pseudomonadati</taxon>
        <taxon>Pseudomonadota</taxon>
        <taxon>Alphaproteobacteria</taxon>
        <taxon>Rhodobacterales</taxon>
        <taxon>Rhodobacter group</taxon>
        <taxon>Rhodobacter</taxon>
    </lineage>
</organism>
<accession>Q05389</accession>
<accession>D5AMF5</accession>
<reference key="1">
    <citation type="journal article" date="1993" name="EMBO J.">
        <title>A novel membrane-associated c-type cytochrome, cyt cy, can mediate the photosynthetic growth of Rhodobacter capsulatus and Rhodobacter sphaeroides.</title>
        <authorList>
            <person name="Jenney F.E. Jr."/>
            <person name="Daldal F."/>
        </authorList>
    </citation>
    <scope>NUCLEOTIDE SEQUENCE [GENOMIC DNA]</scope>
    <source>
        <strain>MT1131</strain>
    </source>
</reference>
<reference key="2">
    <citation type="journal article" date="2010" name="J. Bacteriol.">
        <title>Complete genome sequence of the photosynthetic purple nonsulfur bacterium Rhodobacter capsulatus SB 1003.</title>
        <authorList>
            <person name="Strnad H."/>
            <person name="Lapidus A."/>
            <person name="Paces J."/>
            <person name="Ulbrich P."/>
            <person name="Vlcek C."/>
            <person name="Paces V."/>
            <person name="Haselkorn R."/>
        </authorList>
    </citation>
    <scope>NUCLEOTIDE SEQUENCE [LARGE SCALE GENOMIC DNA]</scope>
    <source>
        <strain>ATCC BAA-309 / NBRC 16581 / SB1003</strain>
    </source>
</reference>
<gene>
    <name type="primary">cycY</name>
    <name type="ordered locus">RCAP_rcc02501</name>
</gene>
<protein>
    <recommendedName>
        <fullName>Cytochrome c-type cyt cy</fullName>
    </recommendedName>
</protein>
<comment type="function">
    <text>Electron transfer pathways that operates during photosynthesis.</text>
</comment>
<comment type="subcellular location">
    <subcellularLocation>
        <location>Cell membrane</location>
        <topology>Single-pass membrane protein</topology>
    </subcellularLocation>
</comment>
<comment type="PTM">
    <text evidence="4">Binds 1 heme c group covalently per subunit.</text>
</comment>
<proteinExistence type="evidence at protein level"/>
<evidence type="ECO:0000255" key="1"/>
<evidence type="ECO:0000255" key="2">
    <source>
        <dbReference type="PROSITE-ProRule" id="PRU00433"/>
    </source>
</evidence>
<evidence type="ECO:0000256" key="3">
    <source>
        <dbReference type="SAM" id="MobiDB-lite"/>
    </source>
</evidence>
<evidence type="ECO:0000305" key="4"/>